<accession>A5I7J6</accession>
<accession>A7G8S8</accession>
<name>RL14_CLOBH</name>
<proteinExistence type="inferred from homology"/>
<organism>
    <name type="scientific">Clostridium botulinum (strain Hall / ATCC 3502 / NCTC 13319 / Type A)</name>
    <dbReference type="NCBI Taxonomy" id="441771"/>
    <lineage>
        <taxon>Bacteria</taxon>
        <taxon>Bacillati</taxon>
        <taxon>Bacillota</taxon>
        <taxon>Clostridia</taxon>
        <taxon>Eubacteriales</taxon>
        <taxon>Clostridiaceae</taxon>
        <taxon>Clostridium</taxon>
    </lineage>
</organism>
<sequence length="122" mass="13268">MIQQQTRLKVADNSGAKEIMCIRVLGGSHRKWGNIGDVIVASVKSATPGGVVKKGEVVKAVIVRSVKGLRRADGSYIKFDENAAVIIKDDKNPKGTRIFGPVARELRDKEFNKILSLAPEVL</sequence>
<gene>
    <name evidence="1" type="primary">rplN</name>
    <name type="ordered locus">CBO3471</name>
    <name type="ordered locus">CLC_3415</name>
</gene>
<feature type="chain" id="PRO_1000055559" description="Large ribosomal subunit protein uL14">
    <location>
        <begin position="1"/>
        <end position="122"/>
    </location>
</feature>
<reference key="1">
    <citation type="journal article" date="2007" name="Genome Res.">
        <title>Genome sequence of a proteolytic (Group I) Clostridium botulinum strain Hall A and comparative analysis of the clostridial genomes.</title>
        <authorList>
            <person name="Sebaihia M."/>
            <person name="Peck M.W."/>
            <person name="Minton N.P."/>
            <person name="Thomson N.R."/>
            <person name="Holden M.T.G."/>
            <person name="Mitchell W.J."/>
            <person name="Carter A.T."/>
            <person name="Bentley S.D."/>
            <person name="Mason D.R."/>
            <person name="Crossman L."/>
            <person name="Paul C.J."/>
            <person name="Ivens A."/>
            <person name="Wells-Bennik M.H.J."/>
            <person name="Davis I.J."/>
            <person name="Cerdeno-Tarraga A.M."/>
            <person name="Churcher C."/>
            <person name="Quail M.A."/>
            <person name="Chillingworth T."/>
            <person name="Feltwell T."/>
            <person name="Fraser A."/>
            <person name="Goodhead I."/>
            <person name="Hance Z."/>
            <person name="Jagels K."/>
            <person name="Larke N."/>
            <person name="Maddison M."/>
            <person name="Moule S."/>
            <person name="Mungall K."/>
            <person name="Norbertczak H."/>
            <person name="Rabbinowitsch E."/>
            <person name="Sanders M."/>
            <person name="Simmonds M."/>
            <person name="White B."/>
            <person name="Whithead S."/>
            <person name="Parkhill J."/>
        </authorList>
    </citation>
    <scope>NUCLEOTIDE SEQUENCE [LARGE SCALE GENOMIC DNA]</scope>
    <source>
        <strain>Hall / ATCC 3502 / NCTC 13319 / Type A</strain>
    </source>
</reference>
<reference key="2">
    <citation type="journal article" date="2007" name="PLoS ONE">
        <title>Analysis of the neurotoxin complex genes in Clostridium botulinum A1-A4 and B1 strains: BoNT/A3, /Ba4 and /B1 clusters are located within plasmids.</title>
        <authorList>
            <person name="Smith T.J."/>
            <person name="Hill K.K."/>
            <person name="Foley B.T."/>
            <person name="Detter J.C."/>
            <person name="Munk A.C."/>
            <person name="Bruce D.C."/>
            <person name="Doggett N.A."/>
            <person name="Smith L.A."/>
            <person name="Marks J.D."/>
            <person name="Xie G."/>
            <person name="Brettin T.S."/>
        </authorList>
    </citation>
    <scope>NUCLEOTIDE SEQUENCE [LARGE SCALE GENOMIC DNA]</scope>
    <source>
        <strain>Hall / ATCC 3502 / NCTC 13319 / Type A</strain>
    </source>
</reference>
<keyword id="KW-1185">Reference proteome</keyword>
<keyword id="KW-0687">Ribonucleoprotein</keyword>
<keyword id="KW-0689">Ribosomal protein</keyword>
<keyword id="KW-0694">RNA-binding</keyword>
<keyword id="KW-0699">rRNA-binding</keyword>
<protein>
    <recommendedName>
        <fullName evidence="1">Large ribosomal subunit protein uL14</fullName>
    </recommendedName>
    <alternativeName>
        <fullName evidence="2">50S ribosomal protein L14</fullName>
    </alternativeName>
</protein>
<evidence type="ECO:0000255" key="1">
    <source>
        <dbReference type="HAMAP-Rule" id="MF_01367"/>
    </source>
</evidence>
<evidence type="ECO:0000305" key="2"/>
<dbReference type="EMBL" id="CP000727">
    <property type="protein sequence ID" value="ABS37091.1"/>
    <property type="molecule type" value="Genomic_DNA"/>
</dbReference>
<dbReference type="EMBL" id="AM412317">
    <property type="protein sequence ID" value="CAL85031.1"/>
    <property type="molecule type" value="Genomic_DNA"/>
</dbReference>
<dbReference type="RefSeq" id="WP_003357295.1">
    <property type="nucleotide sequence ID" value="NC_009698.1"/>
</dbReference>
<dbReference type="RefSeq" id="YP_001255952.1">
    <property type="nucleotide sequence ID" value="NC_009495.1"/>
</dbReference>
<dbReference type="RefSeq" id="YP_001389193.1">
    <property type="nucleotide sequence ID" value="NC_009698.1"/>
</dbReference>
<dbReference type="SMR" id="A5I7J6"/>
<dbReference type="GeneID" id="92940240"/>
<dbReference type="KEGG" id="cbh:CLC_3415"/>
<dbReference type="KEGG" id="cbo:CBO3471"/>
<dbReference type="PATRIC" id="fig|413999.7.peg.3447"/>
<dbReference type="HOGENOM" id="CLU_095071_2_1_9"/>
<dbReference type="PRO" id="PR:A5I7J6"/>
<dbReference type="Proteomes" id="UP000001986">
    <property type="component" value="Chromosome"/>
</dbReference>
<dbReference type="GO" id="GO:0022625">
    <property type="term" value="C:cytosolic large ribosomal subunit"/>
    <property type="evidence" value="ECO:0000318"/>
    <property type="project" value="GO_Central"/>
</dbReference>
<dbReference type="GO" id="GO:0070180">
    <property type="term" value="F:large ribosomal subunit rRNA binding"/>
    <property type="evidence" value="ECO:0000318"/>
    <property type="project" value="GO_Central"/>
</dbReference>
<dbReference type="GO" id="GO:0003735">
    <property type="term" value="F:structural constituent of ribosome"/>
    <property type="evidence" value="ECO:0000318"/>
    <property type="project" value="GO_Central"/>
</dbReference>
<dbReference type="GO" id="GO:0006412">
    <property type="term" value="P:translation"/>
    <property type="evidence" value="ECO:0007669"/>
    <property type="project" value="UniProtKB-UniRule"/>
</dbReference>
<dbReference type="CDD" id="cd00337">
    <property type="entry name" value="Ribosomal_uL14"/>
    <property type="match status" value="1"/>
</dbReference>
<dbReference type="FunFam" id="2.40.150.20:FF:000001">
    <property type="entry name" value="50S ribosomal protein L14"/>
    <property type="match status" value="1"/>
</dbReference>
<dbReference type="Gene3D" id="2.40.150.20">
    <property type="entry name" value="Ribosomal protein L14"/>
    <property type="match status" value="1"/>
</dbReference>
<dbReference type="HAMAP" id="MF_01367">
    <property type="entry name" value="Ribosomal_uL14"/>
    <property type="match status" value="1"/>
</dbReference>
<dbReference type="InterPro" id="IPR000218">
    <property type="entry name" value="Ribosomal_uL14"/>
</dbReference>
<dbReference type="InterPro" id="IPR005745">
    <property type="entry name" value="Ribosomal_uL14_bac-type"/>
</dbReference>
<dbReference type="InterPro" id="IPR019972">
    <property type="entry name" value="Ribosomal_uL14_CS"/>
</dbReference>
<dbReference type="InterPro" id="IPR036853">
    <property type="entry name" value="Ribosomal_uL14_sf"/>
</dbReference>
<dbReference type="NCBIfam" id="TIGR01067">
    <property type="entry name" value="rplN_bact"/>
    <property type="match status" value="1"/>
</dbReference>
<dbReference type="PANTHER" id="PTHR11761">
    <property type="entry name" value="50S/60S RIBOSOMAL PROTEIN L14/L23"/>
    <property type="match status" value="1"/>
</dbReference>
<dbReference type="PANTHER" id="PTHR11761:SF3">
    <property type="entry name" value="LARGE RIBOSOMAL SUBUNIT PROTEIN UL14M"/>
    <property type="match status" value="1"/>
</dbReference>
<dbReference type="Pfam" id="PF00238">
    <property type="entry name" value="Ribosomal_L14"/>
    <property type="match status" value="1"/>
</dbReference>
<dbReference type="SMART" id="SM01374">
    <property type="entry name" value="Ribosomal_L14"/>
    <property type="match status" value="1"/>
</dbReference>
<dbReference type="SUPFAM" id="SSF50193">
    <property type="entry name" value="Ribosomal protein L14"/>
    <property type="match status" value="1"/>
</dbReference>
<dbReference type="PROSITE" id="PS00049">
    <property type="entry name" value="RIBOSOMAL_L14"/>
    <property type="match status" value="1"/>
</dbReference>
<comment type="function">
    <text evidence="1">Binds to 23S rRNA. Forms part of two intersubunit bridges in the 70S ribosome.</text>
</comment>
<comment type="subunit">
    <text evidence="1">Part of the 50S ribosomal subunit. Forms a cluster with proteins L3 and L19. In the 70S ribosome, L14 and L19 interact and together make contacts with the 16S rRNA in bridges B5 and B8.</text>
</comment>
<comment type="similarity">
    <text evidence="1">Belongs to the universal ribosomal protein uL14 family.</text>
</comment>